<name>COBS_RHILO</name>
<dbReference type="EC" id="2.7.8.26" evidence="1"/>
<dbReference type="EMBL" id="BA000012">
    <property type="protein sequence ID" value="BAB48774.1"/>
    <property type="molecule type" value="Genomic_DNA"/>
</dbReference>
<dbReference type="RefSeq" id="WP_010910127.1">
    <property type="nucleotide sequence ID" value="NC_002678.2"/>
</dbReference>
<dbReference type="KEGG" id="mlo:mlr1388"/>
<dbReference type="PATRIC" id="fig|266835.9.peg.1119"/>
<dbReference type="eggNOG" id="COG0368">
    <property type="taxonomic scope" value="Bacteria"/>
</dbReference>
<dbReference type="HOGENOM" id="CLU_057426_1_0_5"/>
<dbReference type="UniPathway" id="UPA00148">
    <property type="reaction ID" value="UER00238"/>
</dbReference>
<dbReference type="Proteomes" id="UP000000552">
    <property type="component" value="Chromosome"/>
</dbReference>
<dbReference type="GO" id="GO:0005886">
    <property type="term" value="C:plasma membrane"/>
    <property type="evidence" value="ECO:0007669"/>
    <property type="project" value="UniProtKB-SubCell"/>
</dbReference>
<dbReference type="GO" id="GO:0051073">
    <property type="term" value="F:adenosylcobinamide-GDP ribazoletransferase activity"/>
    <property type="evidence" value="ECO:0007669"/>
    <property type="project" value="UniProtKB-UniRule"/>
</dbReference>
<dbReference type="GO" id="GO:0008818">
    <property type="term" value="F:cobalamin 5'-phosphate synthase activity"/>
    <property type="evidence" value="ECO:0007669"/>
    <property type="project" value="UniProtKB-UniRule"/>
</dbReference>
<dbReference type="GO" id="GO:0009236">
    <property type="term" value="P:cobalamin biosynthetic process"/>
    <property type="evidence" value="ECO:0007669"/>
    <property type="project" value="UniProtKB-UniRule"/>
</dbReference>
<dbReference type="HAMAP" id="MF_00719">
    <property type="entry name" value="CobS"/>
    <property type="match status" value="1"/>
</dbReference>
<dbReference type="InterPro" id="IPR003805">
    <property type="entry name" value="CobS"/>
</dbReference>
<dbReference type="NCBIfam" id="TIGR00317">
    <property type="entry name" value="cobS"/>
    <property type="match status" value="1"/>
</dbReference>
<dbReference type="PANTHER" id="PTHR34148">
    <property type="entry name" value="ADENOSYLCOBINAMIDE-GDP RIBAZOLETRANSFERASE"/>
    <property type="match status" value="1"/>
</dbReference>
<dbReference type="PANTHER" id="PTHR34148:SF1">
    <property type="entry name" value="ADENOSYLCOBINAMIDE-GDP RIBAZOLETRANSFERASE"/>
    <property type="match status" value="1"/>
</dbReference>
<dbReference type="Pfam" id="PF02654">
    <property type="entry name" value="CobS"/>
    <property type="match status" value="1"/>
</dbReference>
<gene>
    <name evidence="1" type="primary">cobS</name>
    <name type="ordered locus">mlr1388</name>
</gene>
<reference key="1">
    <citation type="journal article" date="2000" name="DNA Res.">
        <title>Complete genome structure of the nitrogen-fixing symbiotic bacterium Mesorhizobium loti.</title>
        <authorList>
            <person name="Kaneko T."/>
            <person name="Nakamura Y."/>
            <person name="Sato S."/>
            <person name="Asamizu E."/>
            <person name="Kato T."/>
            <person name="Sasamoto S."/>
            <person name="Watanabe A."/>
            <person name="Idesawa K."/>
            <person name="Ishikawa A."/>
            <person name="Kawashima K."/>
            <person name="Kimura T."/>
            <person name="Kishida Y."/>
            <person name="Kiyokawa C."/>
            <person name="Kohara M."/>
            <person name="Matsumoto M."/>
            <person name="Matsuno A."/>
            <person name="Mochizuki Y."/>
            <person name="Nakayama S."/>
            <person name="Nakazaki N."/>
            <person name="Shimpo S."/>
            <person name="Sugimoto M."/>
            <person name="Takeuchi C."/>
            <person name="Yamada M."/>
            <person name="Tabata S."/>
        </authorList>
    </citation>
    <scope>NUCLEOTIDE SEQUENCE [LARGE SCALE GENOMIC DNA]</scope>
    <source>
        <strain>LMG 29417 / CECT 9101 / MAFF 303099</strain>
    </source>
</reference>
<sequence length="259" mass="26130">MKLPNLTLSPRQILDDVALCLVFFTRLPLPDLDFRGRGLAAAIWAAPVAGLLVGLIGAIVFATAERFGLAMGPAAALALVATVIATGCLHEDGLSDVADGFGGGKSRGRKLDIMRDSRIGAYGAMALALSLLIRWNVLSELVDPTQALFALVAAHAASRGVLGAFMHLLPPARSDGLSAGAGAVSLETAIAGAVLGAIPLLLLGAGGAIAALILLGLLFAAFHALCLNQIGGQTGDTIGALQQVSEIAVLLVASVALSS</sequence>
<keyword id="KW-0997">Cell inner membrane</keyword>
<keyword id="KW-1003">Cell membrane</keyword>
<keyword id="KW-0169">Cobalamin biosynthesis</keyword>
<keyword id="KW-0460">Magnesium</keyword>
<keyword id="KW-0472">Membrane</keyword>
<keyword id="KW-0808">Transferase</keyword>
<keyword id="KW-0812">Transmembrane</keyword>
<keyword id="KW-1133">Transmembrane helix</keyword>
<evidence type="ECO:0000255" key="1">
    <source>
        <dbReference type="HAMAP-Rule" id="MF_00719"/>
    </source>
</evidence>
<accession>Q98KP0</accession>
<comment type="function">
    <text evidence="1">Joins adenosylcobinamide-GDP and alpha-ribazole to generate adenosylcobalamin (Ado-cobalamin). Also synthesizes adenosylcobalamin 5'-phosphate from adenosylcobinamide-GDP and alpha-ribazole 5'-phosphate.</text>
</comment>
<comment type="catalytic activity">
    <reaction evidence="1">
        <text>alpha-ribazole + adenosylcob(III)inamide-GDP = adenosylcob(III)alamin + GMP + H(+)</text>
        <dbReference type="Rhea" id="RHEA:16049"/>
        <dbReference type="ChEBI" id="CHEBI:10329"/>
        <dbReference type="ChEBI" id="CHEBI:15378"/>
        <dbReference type="ChEBI" id="CHEBI:18408"/>
        <dbReference type="ChEBI" id="CHEBI:58115"/>
        <dbReference type="ChEBI" id="CHEBI:60487"/>
        <dbReference type="EC" id="2.7.8.26"/>
    </reaction>
</comment>
<comment type="catalytic activity">
    <reaction evidence="1">
        <text>alpha-ribazole 5'-phosphate + adenosylcob(III)inamide-GDP = adenosylcob(III)alamin 5'-phosphate + GMP + H(+)</text>
        <dbReference type="Rhea" id="RHEA:23560"/>
        <dbReference type="ChEBI" id="CHEBI:15378"/>
        <dbReference type="ChEBI" id="CHEBI:57918"/>
        <dbReference type="ChEBI" id="CHEBI:58115"/>
        <dbReference type="ChEBI" id="CHEBI:60487"/>
        <dbReference type="ChEBI" id="CHEBI:60493"/>
        <dbReference type="EC" id="2.7.8.26"/>
    </reaction>
</comment>
<comment type="cofactor">
    <cofactor evidence="1">
        <name>Mg(2+)</name>
        <dbReference type="ChEBI" id="CHEBI:18420"/>
    </cofactor>
</comment>
<comment type="pathway">
    <text evidence="1">Cofactor biosynthesis; adenosylcobalamin biosynthesis; adenosylcobalamin from cob(II)yrinate a,c-diamide: step 7/7.</text>
</comment>
<comment type="subcellular location">
    <subcellularLocation>
        <location evidence="1">Cell inner membrane</location>
        <topology evidence="1">Multi-pass membrane protein</topology>
    </subcellularLocation>
</comment>
<comment type="similarity">
    <text evidence="1">Belongs to the CobS family.</text>
</comment>
<proteinExistence type="inferred from homology"/>
<organism>
    <name type="scientific">Mesorhizobium japonicum (strain LMG 29417 / CECT 9101 / MAFF 303099)</name>
    <name type="common">Mesorhizobium loti (strain MAFF 303099)</name>
    <dbReference type="NCBI Taxonomy" id="266835"/>
    <lineage>
        <taxon>Bacteria</taxon>
        <taxon>Pseudomonadati</taxon>
        <taxon>Pseudomonadota</taxon>
        <taxon>Alphaproteobacteria</taxon>
        <taxon>Hyphomicrobiales</taxon>
        <taxon>Phyllobacteriaceae</taxon>
        <taxon>Mesorhizobium</taxon>
    </lineage>
</organism>
<feature type="chain" id="PRO_0000146892" description="Adenosylcobinamide-GDP ribazoletransferase">
    <location>
        <begin position="1"/>
        <end position="259"/>
    </location>
</feature>
<feature type="transmembrane region" description="Helical" evidence="1">
    <location>
        <begin position="41"/>
        <end position="61"/>
    </location>
</feature>
<feature type="transmembrane region" description="Helical" evidence="1">
    <location>
        <begin position="67"/>
        <end position="87"/>
    </location>
</feature>
<feature type="transmembrane region" description="Helical" evidence="1">
    <location>
        <begin position="119"/>
        <end position="139"/>
    </location>
</feature>
<feature type="transmembrane region" description="Helical" evidence="1">
    <location>
        <begin position="148"/>
        <end position="168"/>
    </location>
</feature>
<feature type="transmembrane region" description="Helical" evidence="1">
    <location>
        <begin position="179"/>
        <end position="199"/>
    </location>
</feature>
<feature type="transmembrane region" description="Helical" evidence="1">
    <location>
        <begin position="200"/>
        <end position="220"/>
    </location>
</feature>
<feature type="transmembrane region" description="Helical" evidence="1">
    <location>
        <begin position="237"/>
        <end position="257"/>
    </location>
</feature>
<protein>
    <recommendedName>
        <fullName evidence="1">Adenosylcobinamide-GDP ribazoletransferase</fullName>
        <ecNumber evidence="1">2.7.8.26</ecNumber>
    </recommendedName>
    <alternativeName>
        <fullName evidence="1">Cobalamin synthase</fullName>
    </alternativeName>
    <alternativeName>
        <fullName evidence="1">Cobalamin-5'-phosphate synthase</fullName>
    </alternativeName>
</protein>